<organism>
    <name type="scientific">Homo sapiens</name>
    <name type="common">Human</name>
    <dbReference type="NCBI Taxonomy" id="9606"/>
    <lineage>
        <taxon>Eukaryota</taxon>
        <taxon>Metazoa</taxon>
        <taxon>Chordata</taxon>
        <taxon>Craniata</taxon>
        <taxon>Vertebrata</taxon>
        <taxon>Euteleostomi</taxon>
        <taxon>Mammalia</taxon>
        <taxon>Eutheria</taxon>
        <taxon>Euarchontoglires</taxon>
        <taxon>Primates</taxon>
        <taxon>Haplorrhini</taxon>
        <taxon>Catarrhini</taxon>
        <taxon>Hominidae</taxon>
        <taxon>Homo</taxon>
    </lineage>
</organism>
<gene>
    <name type="primary">LTBP2</name>
    <name type="synonym">C14orf141</name>
    <name type="synonym">LTBP3</name>
</gene>
<accession>Q14767</accession>
<accession>Q99907</accession>
<accession>Q9NS51</accession>
<evidence type="ECO:0000250" key="1">
    <source>
        <dbReference type="UniProtKB" id="O08999"/>
    </source>
</evidence>
<evidence type="ECO:0000250" key="2">
    <source>
        <dbReference type="UniProtKB" id="O35806"/>
    </source>
</evidence>
<evidence type="ECO:0000250" key="3">
    <source>
        <dbReference type="UniProtKB" id="Q14766"/>
    </source>
</evidence>
<evidence type="ECO:0000255" key="4"/>
<evidence type="ECO:0000255" key="5">
    <source>
        <dbReference type="PROSITE-ProRule" id="PRU00076"/>
    </source>
</evidence>
<evidence type="ECO:0000255" key="6">
    <source>
        <dbReference type="PROSITE-ProRule" id="PRU00697"/>
    </source>
</evidence>
<evidence type="ECO:0000256" key="7">
    <source>
        <dbReference type="SAM" id="MobiDB-lite"/>
    </source>
</evidence>
<evidence type="ECO:0000269" key="8">
    <source>
    </source>
</evidence>
<evidence type="ECO:0000269" key="9">
    <source>
    </source>
</evidence>
<evidence type="ECO:0000269" key="10">
    <source>
    </source>
</evidence>
<evidence type="ECO:0000269" key="11">
    <source>
    </source>
</evidence>
<evidence type="ECO:0000269" key="12">
    <source>
    </source>
</evidence>
<evidence type="ECO:0000269" key="13">
    <source>
    </source>
</evidence>
<evidence type="ECO:0000269" key="14">
    <source>
    </source>
</evidence>
<evidence type="ECO:0000303" key="15">
    <source>
    </source>
</evidence>
<evidence type="ECO:0000303" key="16">
    <source>
    </source>
</evidence>
<evidence type="ECO:0000305" key="17"/>
<sequence>MRPRTKARSPGRALRNPWRGFLPLTLALFVGAGHAQRDPVGRYEPAGGDANRLRRPGGSYPAAAAAKVYSLFREQDAPVAGLQPVERAQPGWGSPRRPTEAEARRPSRAQQSRRVQPPAQTRRSTPLGQQQPAPRTRAAPALPRLGTPQRSGAAPPTPPRGRLTGRNVCGGQCCPGWTTANSTNHCIKPVCEPPCQNRGSCSRPQLCVCRSGFRGARCEEVIPDEEFDPQNSRLAPRRWAERSPNLRRSSAAGEGTLARAQPPAPQSPPAPQSPPAGTLSGLSQTHPSQQHVGLSRTVRLHPTATASSQLSSNALPPGPGLEQRDGTQQAVPLEHPSSPWGLNLTEKIKKIKIVFTPTICKQTCARGHCANSCERGDTTTLYSQGGHGHDPKSGFRIYFCQIPCLNGGRCIGRDECWCPANSTGKFCHLPIPQPDREPPGRGSRPRALLEAPLKQSTFTLPLSNQLASVNPSLVKVHIHHPPEASVQIHQVAQVRGGVEEALVENSVETRPPPWLPASPGHSLWDSNNIPARSGEPPRPLPPAAPRPRGLLGRCYLNTVNGQCANPLLELTTQEDCCGSVGAFWGVTLCAPCPPRPASPVIENGQLECPQGYKRLNLTHCQDINECLTLGLCKDAECVNTRGSYLCTCRPGLMLDPSRSRCVSDKAISMLQGLCYRSLGPGTCTLPLAQRITKQICCCSRVGKAWGSECEKCPLPGTEAFREICPAGHGYTYASSDIRLSMRKAEEEELARPPREQGQRSSGALPGPAERQPLRVVTDTWLEAGTIPDKGDSQAGQVTTSVTHAPAWVTGNATTPPMPEQGIAEIQEEQVTPSTDVLVTLSTPGIDRCAAGATNVCGPGTCVNLPDGYRCVCSPGYQLHPSQAYCTDDNECLRDPCKGKGRCINRVGSYSCFCYPGYTLATSGATQECQDINECEQPGVCSGGQCTNTEGSYHCECDQGYIMVRKGHCQDINECRHPGTCPDGRCVNSPGSYTCLACEEGYRGQSGSCVDVNECLTPGVCAHGKCTNLEGSFRCSCEQGYEVTSDEKGCQDVDECASRASCPTGLCLNTEGSFACSACENGYWVNEDGTACEDLDECAFPGVCPSGVCTNTAGSFSCKDCDGGYRPSPLGDSCEDVDECEDPQSSCLGGECKNTVGSYQCLCPQGFQLANGTVCEDVNECMGEEHCAPHGECLNSHGSFFCLCAPGFVSAEGGTSCQDVDECATTDPCVGGHCVNTEGSFNCLCETGFQPSPESGECVDIDECEDYGDPVCGTWKCENSPGSYRCVLGCQPGFHMAPNGDCIDIDECANDTMCGSHGFCDNTDGSFRCLCDQGFEISPSGWDCVDVNECELMLAVCGAALCENVEGSFLCLCASDLEEYDAQEGHCRPRGAGGQSMSEAPTGDHAPAPTRMDCYSGQKGHAPCSSVLGRNTTQAECCCTQGASWGDACDLCPSEDSAEFSEICPSGKGYIPVEGAWTFGQTMYTDADECVIFGPGLCPNGRCLNTVPGYVCLCNPGFHYDASHKKCEDHDECQDLACENGECVNTEGSFHCFCSPPLTLDLSQQRCMNSTSSTEDLPDHDIHMDICWKKVTNDVCSEPLRGHRTTYTECCCQDGEAWSQQCALCPPRSSEVYAQLCNVARIEAEREAGVHFRPGYEYGPGPDDLHYSIYGPDGAPFYNYLGPEDTVPEPAFPNTAGHSADRTPILESPLQPSELQPHYVASHPEPPAGFEGLQAEECGILNGCENGRCVRVREGYTCDCFEGFQLDAAHMACVDVNECDDLNGPAVLCVHGYCENTEGSYRCHCSPGYVAEAGPPHCTAKE</sequence>
<dbReference type="EMBL" id="Z37976">
    <property type="protein sequence ID" value="CAA86030.1"/>
    <property type="molecule type" value="mRNA"/>
</dbReference>
<dbReference type="EMBL" id="S82451">
    <property type="protein sequence ID" value="AAB37459.1"/>
    <property type="molecule type" value="mRNA"/>
</dbReference>
<dbReference type="EMBL" id="AC013451">
    <property type="protein sequence ID" value="AAF87081.1"/>
    <property type="molecule type" value="Genomic_DNA"/>
</dbReference>
<dbReference type="CCDS" id="CCDS9831.1"/>
<dbReference type="PIR" id="A55494">
    <property type="entry name" value="A55494"/>
</dbReference>
<dbReference type="RefSeq" id="NP_000419.1">
    <property type="nucleotide sequence ID" value="NM_000428.3"/>
</dbReference>
<dbReference type="BioGRID" id="110231">
    <property type="interactions" value="96"/>
</dbReference>
<dbReference type="FunCoup" id="Q14767">
    <property type="interactions" value="128"/>
</dbReference>
<dbReference type="IntAct" id="Q14767">
    <property type="interactions" value="83"/>
</dbReference>
<dbReference type="MINT" id="Q14767"/>
<dbReference type="STRING" id="9606.ENSP00000261978"/>
<dbReference type="GlyConnect" id="1448">
    <property type="glycosylation" value="16 N-Linked glycans (3 sites)"/>
</dbReference>
<dbReference type="GlyCosmos" id="Q14767">
    <property type="glycosylation" value="28 sites, 21 glycans"/>
</dbReference>
<dbReference type="GlyGen" id="Q14767">
    <property type="glycosylation" value="33 sites, 32 N-linked glycans (4 sites), 8 O-linked glycans (23 sites)"/>
</dbReference>
<dbReference type="iPTMnet" id="Q14767"/>
<dbReference type="PhosphoSitePlus" id="Q14767"/>
<dbReference type="SwissPalm" id="Q14767"/>
<dbReference type="BioMuta" id="LTBP2"/>
<dbReference type="DMDM" id="296439311"/>
<dbReference type="jPOST" id="Q14767"/>
<dbReference type="MassIVE" id="Q14767"/>
<dbReference type="PaxDb" id="9606-ENSP00000261978"/>
<dbReference type="PeptideAtlas" id="Q14767"/>
<dbReference type="ProteomicsDB" id="60164"/>
<dbReference type="Antibodypedia" id="157">
    <property type="antibodies" value="124 antibodies from 23 providers"/>
</dbReference>
<dbReference type="DNASU" id="4053"/>
<dbReference type="Ensembl" id="ENST00000261978.9">
    <property type="protein sequence ID" value="ENSP00000261978.4"/>
    <property type="gene ID" value="ENSG00000119681.12"/>
</dbReference>
<dbReference type="GeneID" id="4053"/>
<dbReference type="KEGG" id="hsa:4053"/>
<dbReference type="MANE-Select" id="ENST00000261978.9">
    <property type="protein sequence ID" value="ENSP00000261978.4"/>
    <property type="RefSeq nucleotide sequence ID" value="NM_000428.3"/>
    <property type="RefSeq protein sequence ID" value="NP_000419.1"/>
</dbReference>
<dbReference type="UCSC" id="uc001xqa.4">
    <property type="organism name" value="human"/>
</dbReference>
<dbReference type="AGR" id="HGNC:6715"/>
<dbReference type="CTD" id="4053"/>
<dbReference type="DisGeNET" id="4053"/>
<dbReference type="GeneCards" id="LTBP2"/>
<dbReference type="GeneReviews" id="LTBP2"/>
<dbReference type="HGNC" id="HGNC:6715">
    <property type="gene designation" value="LTBP2"/>
</dbReference>
<dbReference type="HPA" id="ENSG00000119681">
    <property type="expression patterns" value="Low tissue specificity"/>
</dbReference>
<dbReference type="MalaCards" id="LTBP2"/>
<dbReference type="MIM" id="251750">
    <property type="type" value="phenotype"/>
</dbReference>
<dbReference type="MIM" id="602091">
    <property type="type" value="gene"/>
</dbReference>
<dbReference type="MIM" id="613086">
    <property type="type" value="phenotype"/>
</dbReference>
<dbReference type="MIM" id="614819">
    <property type="type" value="phenotype"/>
</dbReference>
<dbReference type="neXtProt" id="NX_Q14767"/>
<dbReference type="OpenTargets" id="ENSG00000119681"/>
<dbReference type="Orphanet" id="98976">
    <property type="disease" value="Congenital glaucoma"/>
</dbReference>
<dbReference type="Orphanet" id="238763">
    <property type="disease" value="Glaucoma secondary to spherophakia/ectopia lentis and megalocornea"/>
</dbReference>
<dbReference type="Orphanet" id="3449">
    <property type="disease" value="Weill-Marchesani syndrome"/>
</dbReference>
<dbReference type="PharmGKB" id="PA164741922"/>
<dbReference type="VEuPathDB" id="HostDB:ENSG00000119681"/>
<dbReference type="eggNOG" id="KOG1217">
    <property type="taxonomic scope" value="Eukaryota"/>
</dbReference>
<dbReference type="GeneTree" id="ENSGT00940000160884"/>
<dbReference type="HOGENOM" id="CLU_001884_1_0_1"/>
<dbReference type="InParanoid" id="Q14767"/>
<dbReference type="OMA" id="FICTCKP"/>
<dbReference type="OrthoDB" id="4405280at2759"/>
<dbReference type="PAN-GO" id="Q14767">
    <property type="GO annotations" value="2 GO annotations based on evolutionary models"/>
</dbReference>
<dbReference type="PhylomeDB" id="Q14767"/>
<dbReference type="PathwayCommons" id="Q14767"/>
<dbReference type="Reactome" id="R-HSA-2129379">
    <property type="pathway name" value="Molecules associated with elastic fibres"/>
</dbReference>
<dbReference type="Reactome" id="R-HSA-2173789">
    <property type="pathway name" value="TGF-beta receptor signaling activates SMADs"/>
</dbReference>
<dbReference type="SignaLink" id="Q14767"/>
<dbReference type="SIGNOR" id="Q14767"/>
<dbReference type="BioGRID-ORCS" id="4053">
    <property type="hits" value="14 hits in 1138 CRISPR screens"/>
</dbReference>
<dbReference type="ChiTaRS" id="LTBP2">
    <property type="organism name" value="human"/>
</dbReference>
<dbReference type="GeneWiki" id="LTBP2"/>
<dbReference type="GenomeRNAi" id="4053"/>
<dbReference type="Pharos" id="Q14767">
    <property type="development level" value="Tbio"/>
</dbReference>
<dbReference type="PRO" id="PR:Q14767"/>
<dbReference type="Proteomes" id="UP000005640">
    <property type="component" value="Chromosome 14"/>
</dbReference>
<dbReference type="RNAct" id="Q14767">
    <property type="molecule type" value="protein"/>
</dbReference>
<dbReference type="Bgee" id="ENSG00000119681">
    <property type="expression patterns" value="Expressed in descending thoracic aorta and 198 other cell types or tissues"/>
</dbReference>
<dbReference type="ExpressionAtlas" id="Q14767">
    <property type="expression patterns" value="baseline and differential"/>
</dbReference>
<dbReference type="GO" id="GO:0062023">
    <property type="term" value="C:collagen-containing extracellular matrix"/>
    <property type="evidence" value="ECO:0007005"/>
    <property type="project" value="BHF-UCL"/>
</dbReference>
<dbReference type="GO" id="GO:0070062">
    <property type="term" value="C:extracellular exosome"/>
    <property type="evidence" value="ECO:0007005"/>
    <property type="project" value="UniProtKB"/>
</dbReference>
<dbReference type="GO" id="GO:0031012">
    <property type="term" value="C:extracellular matrix"/>
    <property type="evidence" value="ECO:0000304"/>
    <property type="project" value="ProtInc"/>
</dbReference>
<dbReference type="GO" id="GO:0005576">
    <property type="term" value="C:extracellular region"/>
    <property type="evidence" value="ECO:0007005"/>
    <property type="project" value="BHF-UCL"/>
</dbReference>
<dbReference type="GO" id="GO:0005615">
    <property type="term" value="C:extracellular space"/>
    <property type="evidence" value="ECO:0007005"/>
    <property type="project" value="BHF-UCL"/>
</dbReference>
<dbReference type="GO" id="GO:0005509">
    <property type="term" value="F:calcium ion binding"/>
    <property type="evidence" value="ECO:0007669"/>
    <property type="project" value="InterPro"/>
</dbReference>
<dbReference type="GO" id="GO:0019838">
    <property type="term" value="F:growth factor binding"/>
    <property type="evidence" value="ECO:0007669"/>
    <property type="project" value="UniProtKB-KW"/>
</dbReference>
<dbReference type="GO" id="GO:0008201">
    <property type="term" value="F:heparin binding"/>
    <property type="evidence" value="ECO:0007669"/>
    <property type="project" value="UniProtKB-KW"/>
</dbReference>
<dbReference type="GO" id="GO:0050436">
    <property type="term" value="F:microfibril binding"/>
    <property type="evidence" value="ECO:0000318"/>
    <property type="project" value="GO_Central"/>
</dbReference>
<dbReference type="GO" id="GO:0009306">
    <property type="term" value="P:protein secretion"/>
    <property type="evidence" value="ECO:0000304"/>
    <property type="project" value="ProtInc"/>
</dbReference>
<dbReference type="GO" id="GO:0006605">
    <property type="term" value="P:protein targeting"/>
    <property type="evidence" value="ECO:0000304"/>
    <property type="project" value="ProtInc"/>
</dbReference>
<dbReference type="GO" id="GO:0097435">
    <property type="term" value="P:supramolecular fiber organization"/>
    <property type="evidence" value="ECO:0000315"/>
    <property type="project" value="MGI"/>
</dbReference>
<dbReference type="GO" id="GO:0007179">
    <property type="term" value="P:transforming growth factor beta receptor signaling pathway"/>
    <property type="evidence" value="ECO:0000304"/>
    <property type="project" value="ProtInc"/>
</dbReference>
<dbReference type="CDD" id="cd00054">
    <property type="entry name" value="EGF_CA"/>
    <property type="match status" value="13"/>
</dbReference>
<dbReference type="FunFam" id="2.10.25.10:FF:000194">
    <property type="entry name" value="Latent transforming growth factor beta binding protein 2"/>
    <property type="match status" value="2"/>
</dbReference>
<dbReference type="FunFam" id="2.10.25.10:FF:000364">
    <property type="entry name" value="Latent transforming growth factor beta binding protein 2"/>
    <property type="match status" value="2"/>
</dbReference>
<dbReference type="FunFam" id="2.10.25.10:FF:000469">
    <property type="entry name" value="Latent transforming growth factor beta binding protein 2"/>
    <property type="match status" value="1"/>
</dbReference>
<dbReference type="FunFam" id="2.10.25.10:FF:000509">
    <property type="entry name" value="Latent transforming growth factor beta binding protein 2"/>
    <property type="match status" value="1"/>
</dbReference>
<dbReference type="FunFam" id="2.10.25.10:FF:000205">
    <property type="entry name" value="latent-transforming growth factor beta-binding protein 1 isoform X1"/>
    <property type="match status" value="1"/>
</dbReference>
<dbReference type="FunFam" id="3.90.290.10:FF:000004">
    <property type="entry name" value="latent-transforming growth factor beta-binding protein 1 isoform X1"/>
    <property type="match status" value="1"/>
</dbReference>
<dbReference type="FunFam" id="2.10.25.10:FF:000046">
    <property type="entry name" value="Latent-transforming growth factor beta-binding protein 1 isoform x2"/>
    <property type="match status" value="1"/>
</dbReference>
<dbReference type="FunFam" id="3.90.290.10:FF:000019">
    <property type="entry name" value="latent-transforming growth factor beta-binding protein 2 isoform X3"/>
    <property type="match status" value="1"/>
</dbReference>
<dbReference type="FunFam" id="2.10.25.10:FF:000014">
    <property type="entry name" value="Latent-transforming growth factor beta-binding protein 3"/>
    <property type="match status" value="1"/>
</dbReference>
<dbReference type="FunFam" id="2.10.25.10:FF:000077">
    <property type="entry name" value="Latent-transforming growth factor beta-binding protein 3 isoform 1"/>
    <property type="match status" value="1"/>
</dbReference>
<dbReference type="FunFam" id="3.90.290.10:FF:000001">
    <property type="entry name" value="Latent-transforming growth factor beta-binding protein 3 isoform 1"/>
    <property type="match status" value="1"/>
</dbReference>
<dbReference type="FunFam" id="3.90.290.10:FF:000002">
    <property type="entry name" value="Latent-transforming growth factor beta-binding protein 3 isoform 1"/>
    <property type="match status" value="1"/>
</dbReference>
<dbReference type="FunFam" id="2.10.25.10:FF:000056">
    <property type="entry name" value="Latent-transforming growth factor beta-binding protein 3 isoform 2"/>
    <property type="match status" value="1"/>
</dbReference>
<dbReference type="FunFam" id="2.10.25.10:FF:000115">
    <property type="entry name" value="latent-transforming growth factor beta-binding protein 4 isoform X2"/>
    <property type="match status" value="1"/>
</dbReference>
<dbReference type="FunFam" id="2.10.25.10:FF:000024">
    <property type="entry name" value="Putative latent-transforming growth factor beta-binding protein 2"/>
    <property type="match status" value="5"/>
</dbReference>
<dbReference type="FunFam" id="2.10.25.10:FF:000273">
    <property type="entry name" value="Putative latent-transforming growth factor beta-binding protein 2"/>
    <property type="match status" value="1"/>
</dbReference>
<dbReference type="Gene3D" id="2.10.25.10">
    <property type="entry name" value="Laminin"/>
    <property type="match status" value="19"/>
</dbReference>
<dbReference type="Gene3D" id="3.90.290.10">
    <property type="entry name" value="TGF-beta binding (TB) domain"/>
    <property type="match status" value="4"/>
</dbReference>
<dbReference type="InterPro" id="IPR050751">
    <property type="entry name" value="ECM_structural_protein"/>
</dbReference>
<dbReference type="InterPro" id="IPR001881">
    <property type="entry name" value="EGF-like_Ca-bd_dom"/>
</dbReference>
<dbReference type="InterPro" id="IPR000742">
    <property type="entry name" value="EGF-like_dom"/>
</dbReference>
<dbReference type="InterPro" id="IPR000152">
    <property type="entry name" value="EGF-type_Asp/Asn_hydroxyl_site"/>
</dbReference>
<dbReference type="InterPro" id="IPR018097">
    <property type="entry name" value="EGF_Ca-bd_CS"/>
</dbReference>
<dbReference type="InterPro" id="IPR009030">
    <property type="entry name" value="Growth_fac_rcpt_cys_sf"/>
</dbReference>
<dbReference type="InterPro" id="IPR049883">
    <property type="entry name" value="NOTCH1_EGF-like"/>
</dbReference>
<dbReference type="InterPro" id="IPR017878">
    <property type="entry name" value="TB_dom"/>
</dbReference>
<dbReference type="InterPro" id="IPR036773">
    <property type="entry name" value="TB_dom_sf"/>
</dbReference>
<dbReference type="PANTHER" id="PTHR24034:SF89">
    <property type="entry name" value="COMPLEMENT COMPONENT C1Q RECEPTOR"/>
    <property type="match status" value="1"/>
</dbReference>
<dbReference type="PANTHER" id="PTHR24034">
    <property type="entry name" value="EGF-LIKE DOMAIN-CONTAINING PROTEIN"/>
    <property type="match status" value="1"/>
</dbReference>
<dbReference type="Pfam" id="PF00008">
    <property type="entry name" value="EGF"/>
    <property type="match status" value="1"/>
</dbReference>
<dbReference type="Pfam" id="PF07645">
    <property type="entry name" value="EGF_CA"/>
    <property type="match status" value="17"/>
</dbReference>
<dbReference type="Pfam" id="PF00683">
    <property type="entry name" value="TB"/>
    <property type="match status" value="4"/>
</dbReference>
<dbReference type="SMART" id="SM00181">
    <property type="entry name" value="EGF"/>
    <property type="match status" value="20"/>
</dbReference>
<dbReference type="SMART" id="SM00179">
    <property type="entry name" value="EGF_CA"/>
    <property type="match status" value="18"/>
</dbReference>
<dbReference type="SUPFAM" id="SSF57196">
    <property type="entry name" value="EGF/Laminin"/>
    <property type="match status" value="6"/>
</dbReference>
<dbReference type="SUPFAM" id="SSF57184">
    <property type="entry name" value="Growth factor receptor domain"/>
    <property type="match status" value="5"/>
</dbReference>
<dbReference type="SUPFAM" id="SSF57581">
    <property type="entry name" value="TB module/8-cys domain"/>
    <property type="match status" value="4"/>
</dbReference>
<dbReference type="PROSITE" id="PS00010">
    <property type="entry name" value="ASX_HYDROXYL"/>
    <property type="match status" value="13"/>
</dbReference>
<dbReference type="PROSITE" id="PS00022">
    <property type="entry name" value="EGF_1"/>
    <property type="match status" value="2"/>
</dbReference>
<dbReference type="PROSITE" id="PS01186">
    <property type="entry name" value="EGF_2"/>
    <property type="match status" value="11"/>
</dbReference>
<dbReference type="PROSITE" id="PS50026">
    <property type="entry name" value="EGF_3"/>
    <property type="match status" value="15"/>
</dbReference>
<dbReference type="PROSITE" id="PS01187">
    <property type="entry name" value="EGF_CA"/>
    <property type="match status" value="16"/>
</dbReference>
<dbReference type="PROSITE" id="PS51364">
    <property type="entry name" value="TB"/>
    <property type="match status" value="4"/>
</dbReference>
<proteinExistence type="evidence at protein level"/>
<feature type="signal peptide" evidence="2">
    <location>
        <begin position="1"/>
        <end position="35"/>
    </location>
</feature>
<feature type="chain" id="PRO_0000007643" description="Latent-transforming growth factor beta-binding protein 2">
    <location>
        <begin position="36"/>
        <end position="1821"/>
    </location>
</feature>
<feature type="domain" description="EGF-like 1" evidence="5">
    <location>
        <begin position="187"/>
        <end position="219"/>
    </location>
</feature>
<feature type="domain" description="EGF-like 2" evidence="5">
    <location>
        <begin position="396"/>
        <end position="428"/>
    </location>
</feature>
<feature type="domain" description="TB 1" evidence="6">
    <location>
        <begin position="552"/>
        <end position="604"/>
    </location>
</feature>
<feature type="domain" description="EGF-like 3; calcium-binding" evidence="5">
    <location>
        <begin position="622"/>
        <end position="662"/>
    </location>
</feature>
<feature type="domain" description="TB 2" evidence="6">
    <location>
        <begin position="672"/>
        <end position="724"/>
    </location>
</feature>
<feature type="domain" description="EGF-like 4" evidence="5">
    <location>
        <begin position="844"/>
        <end position="886"/>
    </location>
</feature>
<feature type="domain" description="EGF-like 5; calcium-binding" evidence="5">
    <location>
        <begin position="887"/>
        <end position="929"/>
    </location>
</feature>
<feature type="domain" description="EGF-like 6; calcium-binding" evidence="5">
    <location>
        <begin position="930"/>
        <end position="969"/>
    </location>
</feature>
<feature type="domain" description="EGF-like 7; calcium-binding" evidence="5">
    <location>
        <begin position="970"/>
        <end position="1009"/>
    </location>
</feature>
<feature type="domain" description="EGF-like 8; calcium-binding" evidence="5">
    <location>
        <begin position="1010"/>
        <end position="1050"/>
    </location>
</feature>
<feature type="domain" description="EGF-like 9; calcium-binding" evidence="5">
    <location>
        <begin position="1051"/>
        <end position="1092"/>
    </location>
</feature>
<feature type="domain" description="EGF-like 10; calcium-binding" evidence="5">
    <location>
        <begin position="1093"/>
        <end position="1134"/>
    </location>
</feature>
<feature type="domain" description="EGF-like 11; calcium-binding" evidence="5">
    <location>
        <begin position="1135"/>
        <end position="1175"/>
    </location>
</feature>
<feature type="domain" description="EGF-like 12; calcium-binding" evidence="5">
    <location>
        <begin position="1176"/>
        <end position="1217"/>
    </location>
</feature>
<feature type="domain" description="EGF-like 13; calcium-binding" evidence="5">
    <location>
        <begin position="1218"/>
        <end position="1258"/>
    </location>
</feature>
<feature type="domain" description="EGF-like 14; calcium-binding" evidence="5">
    <location>
        <begin position="1259"/>
        <end position="1302"/>
    </location>
</feature>
<feature type="domain" description="EGF-like 15; calcium-binding" evidence="5">
    <location>
        <begin position="1303"/>
        <end position="1344"/>
    </location>
</feature>
<feature type="domain" description="EGF-like 16; calcium-binding" evidence="5">
    <location>
        <begin position="1345"/>
        <end position="1387"/>
    </location>
</feature>
<feature type="domain" description="TB 3" evidence="6">
    <location>
        <begin position="1411"/>
        <end position="1463"/>
    </location>
</feature>
<feature type="domain" description="EGF-like 17; calcium-binding" evidence="5">
    <location>
        <begin position="1485"/>
        <end position="1527"/>
    </location>
</feature>
<feature type="domain" description="EGF-like 18; calcium-binding" evidence="5">
    <location>
        <begin position="1528"/>
        <end position="1567"/>
    </location>
</feature>
<feature type="domain" description="TB 4" evidence="6">
    <location>
        <begin position="1584"/>
        <end position="1636"/>
    </location>
</feature>
<feature type="domain" description="EGF-like 19; calcium-binding" evidence="5">
    <location>
        <begin position="1733"/>
        <end position="1773"/>
    </location>
</feature>
<feature type="domain" description="EGF-like 20; calcium-binding" evidence="5">
    <location>
        <begin position="1774"/>
        <end position="1818"/>
    </location>
</feature>
<feature type="region of interest" description="Disordered" evidence="7">
    <location>
        <begin position="38"/>
        <end position="58"/>
    </location>
</feature>
<feature type="region of interest" description="Disordered" evidence="7">
    <location>
        <begin position="81"/>
        <end position="165"/>
    </location>
</feature>
<feature type="region of interest" description="Heparin-binding">
    <location>
        <begin position="94"/>
        <end position="115"/>
    </location>
</feature>
<feature type="region of interest" description="Disordered" evidence="7">
    <location>
        <begin position="229"/>
        <end position="339"/>
    </location>
</feature>
<feature type="region of interest" description="Heparin-binding">
    <location>
        <begin position="232"/>
        <end position="249"/>
    </location>
</feature>
<feature type="region of interest" description="Disordered" evidence="7">
    <location>
        <begin position="510"/>
        <end position="544"/>
    </location>
</feature>
<feature type="region of interest" description="Disordered" evidence="7">
    <location>
        <begin position="744"/>
        <end position="772"/>
    </location>
</feature>
<feature type="region of interest" description="C-terminal domain" evidence="9">
    <location>
        <begin position="1639"/>
        <end position="1821"/>
    </location>
</feature>
<feature type="short sequence motif" description="Cell attachment site" evidence="4">
    <location>
        <begin position="375"/>
        <end position="377"/>
    </location>
</feature>
<feature type="compositionally biased region" description="Low complexity" evidence="7">
    <location>
        <begin position="108"/>
        <end position="120"/>
    </location>
</feature>
<feature type="compositionally biased region" description="Low complexity" evidence="7">
    <location>
        <begin position="129"/>
        <end position="145"/>
    </location>
</feature>
<feature type="compositionally biased region" description="Pro residues" evidence="7">
    <location>
        <begin position="262"/>
        <end position="274"/>
    </location>
</feature>
<feature type="compositionally biased region" description="Polar residues" evidence="7">
    <location>
        <begin position="280"/>
        <end position="292"/>
    </location>
</feature>
<feature type="compositionally biased region" description="Polar residues" evidence="7">
    <location>
        <begin position="304"/>
        <end position="314"/>
    </location>
</feature>
<feature type="compositionally biased region" description="Basic and acidic residues" evidence="7">
    <location>
        <begin position="744"/>
        <end position="757"/>
    </location>
</feature>
<feature type="binding site">
    <location>
        <begin position="344"/>
        <end position="354"/>
    </location>
    <ligand>
        <name>heparin</name>
        <dbReference type="ChEBI" id="CHEBI:28304"/>
    </ligand>
</feature>
<feature type="modified residue" description="Phosphoserine" evidence="1">
    <location>
        <position position="506"/>
    </location>
</feature>
<feature type="glycosylation site" description="N-linked (GlcNAc...) asparagine" evidence="4">
    <location>
        <position position="181"/>
    </location>
</feature>
<feature type="glycosylation site" description="N-linked (GlcNAc...) asparagine" evidence="4">
    <location>
        <position position="343"/>
    </location>
</feature>
<feature type="glycosylation site" description="N-linked (GlcNAc...) asparagine" evidence="4">
    <location>
        <position position="421"/>
    </location>
</feature>
<feature type="glycosylation site" description="N-linked (GlcNAc...) asparagine" evidence="4">
    <location>
        <position position="616"/>
    </location>
</feature>
<feature type="glycosylation site" description="N-linked (GlcNAc...) asparagine" evidence="4">
    <location>
        <position position="811"/>
    </location>
</feature>
<feature type="glycosylation site" description="N-linked (GlcNAc...) asparagine" evidence="4">
    <location>
        <position position="1170"/>
    </location>
</feature>
<feature type="glycosylation site" description="N-linked (GlcNAc...) asparagine" evidence="4">
    <location>
        <position position="1309"/>
    </location>
</feature>
<feature type="glycosylation site" description="N-linked (GlcNAc...) asparagine" evidence="4">
    <location>
        <position position="1430"/>
    </location>
</feature>
<feature type="glycosylation site" description="N-linked (GlcNAc...) asparagine" evidence="4">
    <location>
        <position position="1568"/>
    </location>
</feature>
<feature type="disulfide bond" evidence="5">
    <location>
        <begin position="191"/>
        <end position="201"/>
    </location>
</feature>
<feature type="disulfide bond" evidence="5">
    <location>
        <begin position="195"/>
        <end position="207"/>
    </location>
</feature>
<feature type="disulfide bond" evidence="5">
    <location>
        <begin position="209"/>
        <end position="218"/>
    </location>
</feature>
<feature type="disulfide bond" evidence="5">
    <location>
        <begin position="400"/>
        <end position="410"/>
    </location>
</feature>
<feature type="disulfide bond" evidence="5">
    <location>
        <begin position="404"/>
        <end position="416"/>
    </location>
</feature>
<feature type="disulfide bond" evidence="5">
    <location>
        <begin position="418"/>
        <end position="427"/>
    </location>
</feature>
<feature type="disulfide bond" evidence="6">
    <location>
        <begin position="554"/>
        <end position="576"/>
    </location>
</feature>
<feature type="disulfide bond" evidence="6">
    <location>
        <begin position="563"/>
        <end position="589"/>
    </location>
</feature>
<feature type="disulfide bond" evidence="6">
    <location>
        <begin position="577"/>
        <end position="592"/>
    </location>
</feature>
<feature type="disulfide bond" evidence="5">
    <location>
        <begin position="626"/>
        <end position="637"/>
    </location>
</feature>
<feature type="disulfide bond" evidence="5">
    <location>
        <begin position="632"/>
        <end position="646"/>
    </location>
</feature>
<feature type="disulfide bond" evidence="5">
    <location>
        <begin position="648"/>
        <end position="661"/>
    </location>
</feature>
<feature type="disulfide bond" evidence="6">
    <location>
        <begin position="674"/>
        <end position="696"/>
    </location>
</feature>
<feature type="disulfide bond" evidence="6">
    <location>
        <begin position="683"/>
        <end position="709"/>
    </location>
</feature>
<feature type="disulfide bond" evidence="6">
    <location>
        <begin position="697"/>
        <end position="712"/>
    </location>
</feature>
<feature type="disulfide bond" evidence="6">
    <location>
        <begin position="698"/>
        <end position="724"/>
    </location>
</feature>
<feature type="disulfide bond" evidence="5">
    <location>
        <begin position="848"/>
        <end position="861"/>
    </location>
</feature>
<feature type="disulfide bond" evidence="5">
    <location>
        <begin position="856"/>
        <end position="870"/>
    </location>
</feature>
<feature type="disulfide bond" evidence="5">
    <location>
        <begin position="872"/>
        <end position="885"/>
    </location>
</feature>
<feature type="disulfide bond" evidence="5">
    <location>
        <begin position="891"/>
        <end position="902"/>
    </location>
</feature>
<feature type="disulfide bond" evidence="5">
    <location>
        <begin position="896"/>
        <end position="911"/>
    </location>
</feature>
<feature type="disulfide bond" evidence="5">
    <location>
        <begin position="913"/>
        <end position="928"/>
    </location>
</feature>
<feature type="disulfide bond" evidence="5">
    <location>
        <begin position="934"/>
        <end position="945"/>
    </location>
</feature>
<feature type="disulfide bond" evidence="5">
    <location>
        <begin position="940"/>
        <end position="954"/>
    </location>
</feature>
<feature type="disulfide bond" evidence="5">
    <location>
        <begin position="956"/>
        <end position="968"/>
    </location>
</feature>
<feature type="disulfide bond" evidence="5">
    <location>
        <begin position="974"/>
        <end position="985"/>
    </location>
</feature>
<feature type="disulfide bond" evidence="5">
    <location>
        <begin position="980"/>
        <end position="994"/>
    </location>
</feature>
<feature type="disulfide bond" evidence="5">
    <location>
        <begin position="997"/>
        <end position="1008"/>
    </location>
</feature>
<feature type="disulfide bond" evidence="5">
    <location>
        <begin position="1014"/>
        <end position="1025"/>
    </location>
</feature>
<feature type="disulfide bond" evidence="5">
    <location>
        <begin position="1020"/>
        <end position="1034"/>
    </location>
</feature>
<feature type="disulfide bond" evidence="5">
    <location>
        <begin position="1036"/>
        <end position="1049"/>
    </location>
</feature>
<feature type="disulfide bond" evidence="5">
    <location>
        <begin position="1055"/>
        <end position="1066"/>
    </location>
</feature>
<feature type="disulfide bond" evidence="5">
    <location>
        <begin position="1061"/>
        <end position="1075"/>
    </location>
</feature>
<feature type="disulfide bond" evidence="5">
    <location>
        <begin position="1078"/>
        <end position="1091"/>
    </location>
</feature>
<feature type="disulfide bond" evidence="5">
    <location>
        <begin position="1097"/>
        <end position="1108"/>
    </location>
</feature>
<feature type="disulfide bond" evidence="5">
    <location>
        <begin position="1103"/>
        <end position="1117"/>
    </location>
</feature>
<feature type="disulfide bond" evidence="5">
    <location>
        <begin position="1120"/>
        <end position="1133"/>
    </location>
</feature>
<feature type="disulfide bond" evidence="5">
    <location>
        <begin position="1139"/>
        <end position="1151"/>
    </location>
</feature>
<feature type="disulfide bond" evidence="5">
    <location>
        <begin position="1146"/>
        <end position="1160"/>
    </location>
</feature>
<feature type="disulfide bond" evidence="5">
    <location>
        <begin position="1162"/>
        <end position="1174"/>
    </location>
</feature>
<feature type="disulfide bond" evidence="5">
    <location>
        <begin position="1180"/>
        <end position="1192"/>
    </location>
</feature>
<feature type="disulfide bond" evidence="5">
    <location>
        <begin position="1186"/>
        <end position="1201"/>
    </location>
</feature>
<feature type="disulfide bond" evidence="5">
    <location>
        <begin position="1203"/>
        <end position="1216"/>
    </location>
</feature>
<feature type="disulfide bond" evidence="5">
    <location>
        <begin position="1222"/>
        <end position="1233"/>
    </location>
</feature>
<feature type="disulfide bond" evidence="5">
    <location>
        <begin position="1228"/>
        <end position="1242"/>
    </location>
</feature>
<feature type="disulfide bond" evidence="5">
    <location>
        <begin position="1244"/>
        <end position="1257"/>
    </location>
</feature>
<feature type="disulfide bond" evidence="5">
    <location>
        <begin position="1263"/>
        <end position="1276"/>
    </location>
</feature>
<feature type="disulfide bond" evidence="5">
    <location>
        <begin position="1271"/>
        <end position="1285"/>
    </location>
</feature>
<feature type="disulfide bond" evidence="5">
    <location>
        <begin position="1289"/>
        <end position="1301"/>
    </location>
</feature>
<feature type="disulfide bond" evidence="5">
    <location>
        <begin position="1307"/>
        <end position="1319"/>
    </location>
</feature>
<feature type="disulfide bond" evidence="5">
    <location>
        <begin position="1313"/>
        <end position="1328"/>
    </location>
</feature>
<feature type="disulfide bond" evidence="5">
    <location>
        <begin position="1330"/>
        <end position="1343"/>
    </location>
</feature>
<feature type="disulfide bond" evidence="5">
    <location>
        <begin position="1349"/>
        <end position="1361"/>
    </location>
</feature>
<feature type="disulfide bond" evidence="5">
    <location>
        <begin position="1356"/>
        <end position="1370"/>
    </location>
</feature>
<feature type="disulfide bond" evidence="5">
    <location>
        <begin position="1372"/>
        <end position="1386"/>
    </location>
</feature>
<feature type="disulfide bond" evidence="6">
    <location>
        <begin position="1413"/>
        <end position="1436"/>
    </location>
</feature>
<feature type="disulfide bond" evidence="6">
    <location>
        <begin position="1423"/>
        <end position="1448"/>
    </location>
</feature>
<feature type="disulfide bond" evidence="6">
    <location>
        <begin position="1437"/>
        <end position="1451"/>
    </location>
</feature>
<feature type="disulfide bond" evidence="6">
    <location>
        <begin position="1438"/>
        <end position="1463"/>
    </location>
</feature>
<feature type="disulfide bond" evidence="5">
    <location>
        <begin position="1489"/>
        <end position="1502"/>
    </location>
</feature>
<feature type="disulfide bond" evidence="5">
    <location>
        <begin position="1497"/>
        <end position="1511"/>
    </location>
</feature>
<feature type="disulfide bond" evidence="5">
    <location>
        <begin position="1513"/>
        <end position="1526"/>
    </location>
</feature>
<feature type="disulfide bond" evidence="5">
    <location>
        <begin position="1532"/>
        <end position="1542"/>
    </location>
</feature>
<feature type="disulfide bond" evidence="5">
    <location>
        <begin position="1537"/>
        <end position="1551"/>
    </location>
</feature>
<feature type="disulfide bond" evidence="5">
    <location>
        <begin position="1553"/>
        <end position="1566"/>
    </location>
</feature>
<feature type="disulfide bond" evidence="6">
    <location>
        <begin position="1586"/>
        <end position="1609"/>
    </location>
</feature>
<feature type="disulfide bond" evidence="6">
    <location>
        <begin position="1595"/>
        <end position="1621"/>
    </location>
</feature>
<feature type="disulfide bond" evidence="6">
    <location>
        <begin position="1610"/>
        <end position="1624"/>
    </location>
</feature>
<feature type="disulfide bond" evidence="6">
    <location>
        <begin position="1611"/>
        <end position="1636"/>
    </location>
</feature>
<feature type="disulfide bond" evidence="5">
    <location>
        <begin position="1737"/>
        <end position="1748"/>
    </location>
</feature>
<feature type="disulfide bond" evidence="5">
    <location>
        <begin position="1743"/>
        <end position="1757"/>
    </location>
</feature>
<feature type="disulfide bond" evidence="5">
    <location>
        <begin position="1759"/>
        <end position="1772"/>
    </location>
</feature>
<feature type="disulfide bond" evidence="5">
    <location>
        <begin position="1778"/>
        <end position="1793"/>
    </location>
</feature>
<feature type="disulfide bond" evidence="5">
    <location>
        <begin position="1788"/>
        <end position="1802"/>
    </location>
</feature>
<feature type="disulfide bond" evidence="5">
    <location>
        <begin position="1804"/>
        <end position="1817"/>
    </location>
</feature>
<feature type="sequence variant" id="VAR_059270" description="In dbSNP:rs934996.">
    <original>R</original>
    <variation>M</variation>
    <location>
        <position position="37"/>
    </location>
</feature>
<feature type="sequence variant" id="VAR_055752" description="In dbSNP:rs2304707.">
    <original>P</original>
    <variation>Q</variation>
    <location>
        <position position="319"/>
    </location>
</feature>
<feature type="sequence variant" id="VAR_060337" description="In dbSNP:rs2196862.">
    <original>P</original>
    <variation>S</variation>
    <location>
        <position position="591"/>
    </location>
</feature>
<feature type="sequence variant" id="VAR_068647" description="In WMS3; dbSNP:rs137854856." evidence="13">
    <original>V</original>
    <variation>M</variation>
    <location>
        <position position="1177"/>
    </location>
</feature>
<feature type="mutagenesis site" description="Gain-of-function. Forms a complex with TGFB1." evidence="8">
    <original>DL</original>
    <variation>EIFP</variation>
    <location>
        <begin position="1449"/>
        <end position="1450"/>
    </location>
</feature>
<feature type="sequence conflict" description="In Ref. 1; CAA86030." evidence="17" ref="1">
    <original>K</original>
    <variation>Q</variation>
    <location>
        <position position="897"/>
    </location>
</feature>
<feature type="sequence conflict" description="In Ref. 1; CAA86030." evidence="17" ref="1">
    <original>S</original>
    <variation>T</variation>
    <location>
        <position position="1443"/>
    </location>
</feature>
<feature type="sequence conflict" description="In Ref. 1; CAA86030." evidence="17" ref="1">
    <original>E</original>
    <variation>K</variation>
    <location>
        <position position="1615"/>
    </location>
</feature>
<reference key="1">
    <citation type="journal article" date="1994" name="J. Biol. Chem.">
        <title>Identification and characterization of LTBP-2, a novel latent transforming growth factor-beta-binding protein.</title>
        <authorList>
            <person name="Moren A."/>
            <person name="Olofsson A."/>
            <person name="Stenman G."/>
            <person name="Sahlin P."/>
            <person name="Kanzaki T."/>
            <person name="Claesson-Welsh L."/>
            <person name="ten Dijke P."/>
            <person name="Miyazono K."/>
            <person name="Heldin C."/>
        </authorList>
    </citation>
    <scope>NUCLEOTIDE SEQUENCE [MRNA]</scope>
    <scope>COMPLEX FORMATION WITH TGFB1</scope>
    <scope>SUBCELLULAR LOCATION</scope>
    <scope>TISSUE SPECIFICITY</scope>
    <source>
        <tissue>Foreskin fibroblast</tissue>
    </source>
</reference>
<reference key="2">
    <citation type="journal article" date="1996" name="Int. J. Biochem. Cell Biol.">
        <title>Analysis of the human gene encoding latent transforming growth factor-beta-binding protein-2.</title>
        <authorList>
            <person name="Bashir M.M."/>
            <person name="Han M.-D."/>
            <person name="Abrams W.R."/>
            <person name="Tucker T."/>
            <person name="Ma R.-I."/>
            <person name="Gibson M."/>
            <person name="Ritty T."/>
            <person name="Mecham R."/>
            <person name="Rosenbloom J."/>
        </authorList>
    </citation>
    <scope>NUCLEOTIDE SEQUENCE [MRNA]</scope>
</reference>
<reference key="3">
    <citation type="journal article" date="2003" name="Nature">
        <title>The DNA sequence and analysis of human chromosome 14.</title>
        <authorList>
            <person name="Heilig R."/>
            <person name="Eckenberg R."/>
            <person name="Petit J.-L."/>
            <person name="Fonknechten N."/>
            <person name="Da Silva C."/>
            <person name="Cattolico L."/>
            <person name="Levy M."/>
            <person name="Barbe V."/>
            <person name="De Berardinis V."/>
            <person name="Ureta-Vidal A."/>
            <person name="Pelletier E."/>
            <person name="Vico V."/>
            <person name="Anthouard V."/>
            <person name="Rowen L."/>
            <person name="Madan A."/>
            <person name="Qin S."/>
            <person name="Sun H."/>
            <person name="Du H."/>
            <person name="Pepin K."/>
            <person name="Artiguenave F."/>
            <person name="Robert C."/>
            <person name="Cruaud C."/>
            <person name="Bruels T."/>
            <person name="Jaillon O."/>
            <person name="Friedlander L."/>
            <person name="Samson G."/>
            <person name="Brottier P."/>
            <person name="Cure S."/>
            <person name="Segurens B."/>
            <person name="Aniere F."/>
            <person name="Samain S."/>
            <person name="Crespeau H."/>
            <person name="Abbasi N."/>
            <person name="Aiach N."/>
            <person name="Boscus D."/>
            <person name="Dickhoff R."/>
            <person name="Dors M."/>
            <person name="Dubois I."/>
            <person name="Friedman C."/>
            <person name="Gouyvenoux M."/>
            <person name="James R."/>
            <person name="Madan A."/>
            <person name="Mairey-Estrada B."/>
            <person name="Mangenot S."/>
            <person name="Martins N."/>
            <person name="Menard M."/>
            <person name="Oztas S."/>
            <person name="Ratcliffe A."/>
            <person name="Shaffer T."/>
            <person name="Trask B."/>
            <person name="Vacherie B."/>
            <person name="Bellemere C."/>
            <person name="Belser C."/>
            <person name="Besnard-Gonnet M."/>
            <person name="Bartol-Mavel D."/>
            <person name="Boutard M."/>
            <person name="Briez-Silla S."/>
            <person name="Combette S."/>
            <person name="Dufosse-Laurent V."/>
            <person name="Ferron C."/>
            <person name="Lechaplais C."/>
            <person name="Louesse C."/>
            <person name="Muselet D."/>
            <person name="Magdelenat G."/>
            <person name="Pateau E."/>
            <person name="Petit E."/>
            <person name="Sirvain-Trukniewicz P."/>
            <person name="Trybou A."/>
            <person name="Vega-Czarny N."/>
            <person name="Bataille E."/>
            <person name="Bluet E."/>
            <person name="Bordelais I."/>
            <person name="Dubois M."/>
            <person name="Dumont C."/>
            <person name="Guerin T."/>
            <person name="Haffray S."/>
            <person name="Hammadi R."/>
            <person name="Muanga J."/>
            <person name="Pellouin V."/>
            <person name="Robert D."/>
            <person name="Wunderle E."/>
            <person name="Gauguet G."/>
            <person name="Roy A."/>
            <person name="Sainte-Marthe L."/>
            <person name="Verdier J."/>
            <person name="Verdier-Discala C."/>
            <person name="Hillier L.W."/>
            <person name="Fulton L."/>
            <person name="McPherson J."/>
            <person name="Matsuda F."/>
            <person name="Wilson R."/>
            <person name="Scarpelli C."/>
            <person name="Gyapay G."/>
            <person name="Wincker P."/>
            <person name="Saurin W."/>
            <person name="Quetier F."/>
            <person name="Waterston R."/>
            <person name="Hood L."/>
            <person name="Weissenbach J."/>
        </authorList>
    </citation>
    <scope>NUCLEOTIDE SEQUENCE [LARGE SCALE GENOMIC DNA]</scope>
</reference>
<reference key="4">
    <citation type="journal article" date="2000" name="Mol. Biol. Cell">
        <title>Specific sequence motif of 8-Cys repeats of TGF-beta binding proteins, LTBPs, creates a hydrophobic interaction surface for binding of small latent TGF-beta.</title>
        <authorList>
            <person name="Saharinen J."/>
            <person name="Keski-Oja J."/>
        </authorList>
    </citation>
    <scope>LACK OF INTERACTION WITH TGFB1</scope>
    <scope>MUTAGENESIS OF 1449-ASP-LEU-1450</scope>
</reference>
<reference key="5">
    <citation type="journal article" date="1999" name="Cytokine Growth Factor Rev.">
        <title>Latent transforming growth factor-beta binding proteins (LTBPs) -- structural extracellular matrix proteins for targeting TGF-beta action.</title>
        <authorList>
            <person name="Saharinen J."/>
            <person name="Hyytiainen M."/>
            <person name="Taipale J."/>
            <person name="Keski-Oja J."/>
        </authorList>
    </citation>
    <scope>REVIEW</scope>
</reference>
<reference key="6">
    <citation type="journal article" date="2000" name="Biochem. J.">
        <title>The latent transforming growth factor beta binding protein (LTBP) family.</title>
        <authorList>
            <person name="Oklu R."/>
            <person name="Hesketh R."/>
        </authorList>
    </citation>
    <scope>REVIEW</scope>
</reference>
<reference key="7">
    <citation type="journal article" date="2007" name="Matrix Biol.">
        <title>LTBP-2 specifically interacts with the amino-terminal region of fibrillin-1 and competes with LTBP-1 for binding to this microfibrillar protein.</title>
        <authorList>
            <person name="Hirani R."/>
            <person name="Hanssen E."/>
            <person name="Gibson M.A."/>
        </authorList>
    </citation>
    <scope>INTERACTION WITH FBN1</scope>
    <scope>GLYCOSYLATION</scope>
    <scope>TISSUE SPECIFICITY</scope>
    <scope>C-TERMINAL REGION DOMAIN</scope>
</reference>
<reference key="8">
    <citation type="journal article" date="2009" name="Am. J. Hum. Genet.">
        <title>Null mutations in LTBP2 cause primary congenital glaucoma.</title>
        <authorList>
            <person name="Ali M."/>
            <person name="McKibbin M."/>
            <person name="Booth A."/>
            <person name="Parry D.A."/>
            <person name="Jain P."/>
            <person name="Riazuddin S.A."/>
            <person name="Hejtmancik J.F."/>
            <person name="Khan S.N."/>
            <person name="Firasat S."/>
            <person name="Shires M."/>
            <person name="Gilmour D.F."/>
            <person name="Towns K."/>
            <person name="Murphy A.L."/>
            <person name="Azmanov D."/>
            <person name="Tournev I."/>
            <person name="Cherninkova S."/>
            <person name="Jafri H."/>
            <person name="Raashid Y."/>
            <person name="Toomes C."/>
            <person name="Craig J."/>
            <person name="Mackey D.A."/>
            <person name="Kalaydjieva L."/>
            <person name="Riazuddin S."/>
            <person name="Inglehearn C.F."/>
        </authorList>
    </citation>
    <scope>INVOLVEMENT IN GLC3D</scope>
</reference>
<reference key="9">
    <citation type="journal article" date="2010" name="Hum. Genet.">
        <title>A homozygous mutation in LTBP2 causes isolated microspherophakia.</title>
        <authorList>
            <person name="Kumar A."/>
            <person name="Duvvari M.R."/>
            <person name="Prabhakaran V.C."/>
            <person name="Shetty J.S."/>
            <person name="Murthy G.J."/>
            <person name="Blanton S.H."/>
        </authorList>
    </citation>
    <scope>INVOLVEMENT IN MSPKA</scope>
</reference>
<reference key="10">
    <citation type="journal article" date="2010" name="Matrix Biol.">
        <title>LTBP-2 has multiple heparin/heparan sulfate binding sites.</title>
        <authorList>
            <person name="Parsi M.K."/>
            <person name="Adams J.R."/>
            <person name="Whitelock J."/>
            <person name="Gibson M.A."/>
        </authorList>
    </citation>
    <scope>HEPARIN-BINDING REGIONS</scope>
    <scope>INTERACTION WITH SDC4</scope>
</reference>
<reference key="11">
    <citation type="journal article" date="2012" name="Hum. Mutat.">
        <title>LTBP2 mutations cause Weill-Marchesani and Weill-Marchesani-like syndrome and affect disruptions in the extracellular matrix.</title>
        <authorList>
            <person name="Haji-Seyed-Javadi R."/>
            <person name="Jelodari-Mamaghani S."/>
            <person name="Paylakhi S.H."/>
            <person name="Yazdani S."/>
            <person name="Nilforushan N."/>
            <person name="Fan J.B."/>
            <person name="Klotzle B."/>
            <person name="Mahmoudi M.J."/>
            <person name="Ebrahimian M.J."/>
            <person name="Chelich N."/>
            <person name="Taghiabadi E."/>
            <person name="Kamyab K."/>
            <person name="Boileau C."/>
            <person name="Paisan-Ruiz C."/>
            <person name="Ronaghi M."/>
            <person name="Elahi E."/>
        </authorList>
    </citation>
    <scope>VARIANT WMS3 MET-1177</scope>
</reference>
<keyword id="KW-0225">Disease variant</keyword>
<keyword id="KW-1015">Disulfide bond</keyword>
<keyword id="KW-0242">Dwarfism</keyword>
<keyword id="KW-0245">EGF-like domain</keyword>
<keyword id="KW-0272">Extracellular matrix</keyword>
<keyword id="KW-0955">Glaucoma</keyword>
<keyword id="KW-0325">Glycoprotein</keyword>
<keyword id="KW-0340">Growth factor binding</keyword>
<keyword id="KW-0358">Heparin-binding</keyword>
<keyword id="KW-0379">Hydroxylation</keyword>
<keyword id="KW-0597">Phosphoprotein</keyword>
<keyword id="KW-1267">Proteomics identification</keyword>
<keyword id="KW-1185">Reference proteome</keyword>
<keyword id="KW-0677">Repeat</keyword>
<keyword id="KW-0964">Secreted</keyword>
<keyword id="KW-0732">Signal</keyword>
<comment type="function">
    <text evidence="15 16">May play an integral structural role in elastic-fiber architectural organization and/or assembly.</text>
</comment>
<comment type="subunit">
    <text evidence="9 11 14">Forms part of the large latent transforming growth factor beta precursor complex; removal is essential for activation of complex (PubMed:7798248). Interacts with SDC4 (PubMed:20382221). Interacts (via C-terminal domain) with FBN1 (via N-terminal domain) in a Ca(+2)-dependent manner (PubMed:17293099).</text>
</comment>
<comment type="interaction">
    <interactant intactId="EBI-1546118">
        <id>Q14767</id>
    </interactant>
    <interactant intactId="EBI-947897">
        <id>Q9UBX5</id>
        <label>FBLN5</label>
    </interactant>
    <organismsDiffer>false</organismsDiffer>
    <experiments>2</experiments>
</comment>
<comment type="subcellular location">
    <subcellularLocation>
        <location evidence="14">Secreted</location>
        <location evidence="14">Extracellular space</location>
        <location evidence="14">Extracellular matrix</location>
    </subcellularLocation>
</comment>
<comment type="tissue specificity">
    <text evidence="9 14">Expressed in the aorta (at protein level). Expressed in lung, weakly expressed in heart, placenta, liver and skeletal muscle.</text>
</comment>
<comment type="PTM">
    <text evidence="9">N-Glycosylated.</text>
</comment>
<comment type="PTM">
    <text evidence="3">Contains hydroxylated asparagine residues.</text>
</comment>
<comment type="disease" evidence="10">
    <disease id="DI-02595">
        <name>Glaucoma 3, primary congenital, D</name>
        <acronym>GLC3D</acronym>
        <description>An autosomal recessive form of primary congenital glaucoma (PCG). PCG is characterized by marked increase of intraocular pressure at birth or early childhood, large ocular globes (buphthalmos) and corneal edema. It results from developmental defects of the trabecular meshwork and anterior chamber angle of the eye that prevent adequate drainage of aqueous humor.</description>
        <dbReference type="MIM" id="613086"/>
    </disease>
    <text>The disease is caused by variants affecting the gene represented in this entry.</text>
</comment>
<comment type="disease" evidence="12">
    <disease id="DI-02815">
        <name>Microspherophakia and/or megalocornea, with ectopia lentis and with or without secondary glaucoma</name>
        <acronym>MSPKA</acronym>
        <description>A rare disease characterized by smaller and more spherical lenses than normal bilaterally, an increased anteroposterior thickness of the lens, and highly myopic eyes. Lens dislocation or subluxation may occur, leading to defective accommodation.</description>
        <dbReference type="MIM" id="251750"/>
    </disease>
    <text>The disease is caused by variants affecting the gene represented in this entry.</text>
</comment>
<comment type="disease" evidence="13">
    <disease id="DI-03526">
        <name>Weill-Marchesani syndrome 3</name>
        <acronym>WMS3</acronym>
        <description>A rare connective tissue disorder characterized by short stature, brachydactyly, joint stiffness, and eye abnormalities including microspherophakia, ectopia lentis, severe myopia and glaucoma.</description>
        <dbReference type="MIM" id="614819"/>
    </disease>
    <text>The disease is caused by variants affecting the gene represented in this entry.</text>
</comment>
<comment type="similarity">
    <text evidence="17">Belongs to the LTBP family.</text>
</comment>
<comment type="caution">
    <text evidence="8 14">A publication reported that a complex is formed with TGFB1 (PubMed:7798248). According to another report, there is no association with TGFB1 (PubMed:10930463).</text>
</comment>
<name>LTBP2_HUMAN</name>
<protein>
    <recommendedName>
        <fullName>Latent-transforming growth factor beta-binding protein 2</fullName>
        <shortName>LTBP-2</shortName>
    </recommendedName>
</protein>